<keyword id="KW-0903">Direct protein sequencing</keyword>
<keyword id="KW-0378">Hydrolase</keyword>
<accession>P81593</accession>
<sequence>STLSSNDAKVVDGKATPLGSFPHVKRAGDFLYVSGTSSRRPDNTIAGAELDSTS</sequence>
<proteinExistence type="evidence at protein level"/>
<reference key="1">
    <citation type="journal article" date="1998" name="J. Bacteriol.">
        <title>A novel 2-aminomuconate deaminase in the nitrobenzene degradation pathway of Pseudomonas pseudoalcaligenes JS45.</title>
        <authorList>
            <person name="He Z."/>
            <person name="Spain J.C."/>
        </authorList>
    </citation>
    <scope>PROTEIN SEQUENCE</scope>
    <source>
        <strain>JS45</strain>
    </source>
</reference>
<comment type="function">
    <text>Converts 2-aminomuconate to 4-oxalocrotonate, an intermediate step in the biodegradation of nitrobenzene.</text>
</comment>
<comment type="catalytic activity">
    <reaction>
        <text>(2Z,4E)-2-aminomuconate + H2O = (3E)-2-oxohex-3-enedioate + NH4(+)</text>
        <dbReference type="Rhea" id="RHEA:20996"/>
        <dbReference type="ChEBI" id="CHEBI:15377"/>
        <dbReference type="ChEBI" id="CHEBI:28938"/>
        <dbReference type="ChEBI" id="CHEBI:64908"/>
        <dbReference type="ChEBI" id="CHEBI:77859"/>
        <dbReference type="EC" id="3.5.99.5"/>
    </reaction>
</comment>
<comment type="biophysicochemical properties">
    <kinetics>
        <KM>67 uM for 2-aminomuconate</KM>
        <Vmax>125.0 umol/min/mg enzyme with glucose as substrate</Vmax>
    </kinetics>
    <phDependence>
        <text>Optimum pH is 6.6.</text>
    </phDependence>
</comment>
<comment type="pathway">
    <text>Xenobiotic degradation; nitrobenzene degradation.</text>
</comment>
<comment type="subunit">
    <text>Homohexamer.</text>
</comment>
<dbReference type="EC" id="3.5.99.5"/>
<dbReference type="SMR" id="P81593"/>
<dbReference type="BioCyc" id="MetaCyc:MONOMER-13320"/>
<dbReference type="BRENDA" id="3.5.99.11">
    <property type="organism ID" value="5150"/>
</dbReference>
<dbReference type="UniPathway" id="UPA00923"/>
<dbReference type="GO" id="GO:0050540">
    <property type="term" value="F:2-aminomuconate deaminase activity"/>
    <property type="evidence" value="ECO:0007669"/>
    <property type="project" value="UniProtKB-EC"/>
</dbReference>
<dbReference type="Gene3D" id="3.30.1330.40">
    <property type="entry name" value="RutC-like"/>
    <property type="match status" value="1"/>
</dbReference>
<dbReference type="InterPro" id="IPR035959">
    <property type="entry name" value="RutC-like_sf"/>
</dbReference>
<dbReference type="SUPFAM" id="SSF55298">
    <property type="entry name" value="YjgF-like"/>
    <property type="match status" value="1"/>
</dbReference>
<name>2AMD_ECTOL</name>
<protein>
    <recommendedName>
        <fullName>2-aminomuconate deaminase</fullName>
        <ecNumber>3.5.99.5</ecNumber>
    </recommendedName>
</protein>
<feature type="chain" id="PRO_0000064358" description="2-aminomuconate deaminase">
    <location>
        <begin position="1"/>
        <end position="54" status="greater than"/>
    </location>
</feature>
<feature type="non-terminal residue">
    <location>
        <position position="54"/>
    </location>
</feature>
<organism>
    <name type="scientific">Ectopseudomonas oleovorans</name>
    <name type="common">Pseudomonas oleovorans</name>
    <dbReference type="NCBI Taxonomy" id="301"/>
    <lineage>
        <taxon>Bacteria</taxon>
        <taxon>Pseudomonadati</taxon>
        <taxon>Pseudomonadota</taxon>
        <taxon>Gammaproteobacteria</taxon>
        <taxon>Pseudomonadales</taxon>
        <taxon>Pseudomonadaceae</taxon>
        <taxon>Ectopseudomonas</taxon>
    </lineage>
</organism>